<feature type="chain" id="PRO_1000164098" description="Antiholin-like protein LrgA">
    <location>
        <begin position="1"/>
        <end position="143"/>
    </location>
</feature>
<feature type="transmembrane region" description="Helical" evidence="1">
    <location>
        <begin position="6"/>
        <end position="26"/>
    </location>
</feature>
<feature type="transmembrane region" description="Helical" evidence="1">
    <location>
        <begin position="30"/>
        <end position="50"/>
    </location>
</feature>
<feature type="transmembrane region" description="Helical" evidence="1">
    <location>
        <begin position="61"/>
        <end position="81"/>
    </location>
</feature>
<feature type="transmembrane region" description="Helical" evidence="1">
    <location>
        <begin position="97"/>
        <end position="117"/>
    </location>
</feature>
<comment type="function">
    <text evidence="1">Inhibits the expression or activity of extracellular murein hydrolases by interacting, possibly with LrgB, with the holin-like protein CidA. The LrgAB and CidA proteins may affect the proton motive force of the membrane. May be involved in programmed cell death (PCD), possibly triggering PCD in response to antibiotics and environmental stresses.</text>
</comment>
<comment type="subcellular location">
    <subcellularLocation>
        <location evidence="1">Cell membrane</location>
        <topology evidence="1">Multi-pass membrane protein</topology>
    </subcellularLocation>
</comment>
<comment type="similarity">
    <text evidence="1">Belongs to the CidA/LrgA family. LrgA subfamily.</text>
</comment>
<protein>
    <recommendedName>
        <fullName evidence="1">Antiholin-like protein LrgA</fullName>
    </recommendedName>
</protein>
<keyword id="KW-1003">Cell membrane</keyword>
<keyword id="KW-0204">Cytolysis</keyword>
<keyword id="KW-0472">Membrane</keyword>
<keyword id="KW-0812">Transmembrane</keyword>
<keyword id="KW-1133">Transmembrane helix</keyword>
<dbReference type="EMBL" id="CP001407">
    <property type="protein sequence ID" value="ACO30300.1"/>
    <property type="molecule type" value="Genomic_DNA"/>
</dbReference>
<dbReference type="RefSeq" id="WP_000104901.1">
    <property type="nucleotide sequence ID" value="NZ_CP009318.1"/>
</dbReference>
<dbReference type="SMR" id="C1ER34"/>
<dbReference type="GeneID" id="93005686"/>
<dbReference type="KEGG" id="bcx:BCA_5591"/>
<dbReference type="PATRIC" id="fig|572264.18.peg.18"/>
<dbReference type="Proteomes" id="UP000002210">
    <property type="component" value="Chromosome"/>
</dbReference>
<dbReference type="GO" id="GO:0005886">
    <property type="term" value="C:plasma membrane"/>
    <property type="evidence" value="ECO:0007669"/>
    <property type="project" value="UniProtKB-SubCell"/>
</dbReference>
<dbReference type="GO" id="GO:0019835">
    <property type="term" value="P:cytolysis"/>
    <property type="evidence" value="ECO:0007669"/>
    <property type="project" value="UniProtKB-UniRule"/>
</dbReference>
<dbReference type="GO" id="GO:0031640">
    <property type="term" value="P:killing of cells of another organism"/>
    <property type="evidence" value="ECO:0007669"/>
    <property type="project" value="UniProtKB-KW"/>
</dbReference>
<dbReference type="GO" id="GO:0012501">
    <property type="term" value="P:programmed cell death"/>
    <property type="evidence" value="ECO:0007669"/>
    <property type="project" value="UniProtKB-UniRule"/>
</dbReference>
<dbReference type="HAMAP" id="MF_01141">
    <property type="entry name" value="LrgA"/>
    <property type="match status" value="1"/>
</dbReference>
<dbReference type="InterPro" id="IPR023736">
    <property type="entry name" value="Antiholin-like_LrgA"/>
</dbReference>
<dbReference type="InterPro" id="IPR005538">
    <property type="entry name" value="LrgA/CidA"/>
</dbReference>
<dbReference type="NCBIfam" id="NF003155">
    <property type="entry name" value="PRK04125.1"/>
    <property type="match status" value="1"/>
</dbReference>
<dbReference type="PANTHER" id="PTHR33931:SF4">
    <property type="entry name" value="ANTIHOLIN-LIKE PROTEIN LRGA"/>
    <property type="match status" value="1"/>
</dbReference>
<dbReference type="PANTHER" id="PTHR33931">
    <property type="entry name" value="HOLIN-LIKE PROTEIN CIDA-RELATED"/>
    <property type="match status" value="1"/>
</dbReference>
<dbReference type="Pfam" id="PF03788">
    <property type="entry name" value="LrgA"/>
    <property type="match status" value="1"/>
</dbReference>
<reference key="1">
    <citation type="submission" date="2009-02" db="EMBL/GenBank/DDBJ databases">
        <title>Genome sequence of Bacillus cereus 03BB102.</title>
        <authorList>
            <person name="Dodson R.J."/>
            <person name="Jackson P."/>
            <person name="Munk A.C."/>
            <person name="Brettin T."/>
            <person name="Bruce D."/>
            <person name="Detter C."/>
            <person name="Tapia R."/>
            <person name="Han C."/>
            <person name="Sutton G."/>
            <person name="Sims D."/>
        </authorList>
    </citation>
    <scope>NUCLEOTIDE SEQUENCE [LARGE SCALE GENOMIC DNA]</scope>
    <source>
        <strain>03BB102</strain>
    </source>
</reference>
<organism>
    <name type="scientific">Bacillus cereus (strain 03BB102)</name>
    <dbReference type="NCBI Taxonomy" id="572264"/>
    <lineage>
        <taxon>Bacteria</taxon>
        <taxon>Bacillati</taxon>
        <taxon>Bacillota</taxon>
        <taxon>Bacilli</taxon>
        <taxon>Bacillales</taxon>
        <taxon>Bacillaceae</taxon>
        <taxon>Bacillus</taxon>
        <taxon>Bacillus cereus group</taxon>
    </lineage>
</organism>
<accession>C1ER34</accession>
<evidence type="ECO:0000255" key="1">
    <source>
        <dbReference type="HAMAP-Rule" id="MF_01141"/>
    </source>
</evidence>
<gene>
    <name evidence="1" type="primary">lrgA</name>
    <name type="ordered locus">BCA_5591</name>
</gene>
<sequence length="143" mass="15424">MSTKKVYSFLSQAFIFSAIMLISNIIATHLPIPMPSSVIGLVILFSLLCLKVIKLEQVESLGTALTGIIGFLFVPSGISVINSLGVMGQYFVQILTVIVVATVILLAVTGLFAQFILGKDEKETEDTKELKVVNKGRKHGKVA</sequence>
<name>LRGA_BACC3</name>
<proteinExistence type="inferred from homology"/>